<name>AMBN_MOUSE</name>
<keyword id="KW-0091">Biomineralization</keyword>
<keyword id="KW-0272">Extracellular matrix</keyword>
<keyword id="KW-0379">Hydroxylation</keyword>
<keyword id="KW-0597">Phosphoprotein</keyword>
<keyword id="KW-1185">Reference proteome</keyword>
<keyword id="KW-0964">Secreted</keyword>
<keyword id="KW-0732">Signal</keyword>
<comment type="function">
    <text>Involved in the mineralization and structural organization of enamel.</text>
</comment>
<comment type="subcellular location">
    <subcellularLocation>
        <location>Secreted</location>
        <location>Extracellular space</location>
        <location>Extracellular matrix</location>
    </subcellularLocation>
</comment>
<comment type="tissue specificity">
    <text>Ameloblast-specific.</text>
</comment>
<comment type="developmental stage">
    <text evidence="5 6">Initially expressed during the early cap stage in mandibular molars at 14 dpc, expression continues until birth (PubMed:11062984). Expressed in first lower molars at birth (PubMed:21285247).</text>
</comment>
<comment type="similarity">
    <text evidence="7">Belongs to the ameloblastin family.</text>
</comment>
<reference key="1">
    <citation type="journal article" date="1998" name="Connect. Tissue Res.">
        <title>Identification and characterization of a cDNA for mouse ameloblastin.</title>
        <authorList>
            <person name="Simmons D."/>
            <person name="Gu T.T."/>
            <person name="Krebsbach P.H."/>
            <person name="Yamada Y."/>
            <person name="MacDougall M."/>
        </authorList>
    </citation>
    <scope>NUCLEOTIDE SEQUENCE [MRNA]</scope>
    <scope>DEVELOPMENTAL STAGE</scope>
    <source>
        <strain>Swiss Webster</strain>
        <tissue>Molar</tissue>
    </source>
</reference>
<reference key="2">
    <citation type="journal article" date="2011" name="J. Cell Sci.">
        <title>PERP regulates enamel formation via effects on cell-cell adhesion and gene expression.</title>
        <authorList>
            <person name="Jheon A.H."/>
            <person name="Mostowfi P."/>
            <person name="Snead M.L."/>
            <person name="Ihrie R.A."/>
            <person name="Sone E."/>
            <person name="Pramparo T."/>
            <person name="Attardi L.D."/>
            <person name="Klein O.D."/>
        </authorList>
    </citation>
    <scope>DEVELOPMENTAL STAGE</scope>
</reference>
<accession>O55189</accession>
<organism>
    <name type="scientific">Mus musculus</name>
    <name type="common">Mouse</name>
    <dbReference type="NCBI Taxonomy" id="10090"/>
    <lineage>
        <taxon>Eukaryota</taxon>
        <taxon>Metazoa</taxon>
        <taxon>Chordata</taxon>
        <taxon>Craniata</taxon>
        <taxon>Vertebrata</taxon>
        <taxon>Euteleostomi</taxon>
        <taxon>Mammalia</taxon>
        <taxon>Eutheria</taxon>
        <taxon>Euarchontoglires</taxon>
        <taxon>Glires</taxon>
        <taxon>Rodentia</taxon>
        <taxon>Myomorpha</taxon>
        <taxon>Muroidea</taxon>
        <taxon>Muridae</taxon>
        <taxon>Murinae</taxon>
        <taxon>Mus</taxon>
        <taxon>Mus</taxon>
    </lineage>
</organism>
<evidence type="ECO:0000250" key="1"/>
<evidence type="ECO:0000250" key="2">
    <source>
        <dbReference type="UniProtKB" id="Q28989"/>
    </source>
</evidence>
<evidence type="ECO:0000255" key="3"/>
<evidence type="ECO:0000256" key="4">
    <source>
        <dbReference type="SAM" id="MobiDB-lite"/>
    </source>
</evidence>
<evidence type="ECO:0000269" key="5">
    <source>
    </source>
</evidence>
<evidence type="ECO:0000269" key="6">
    <source>
    </source>
</evidence>
<evidence type="ECO:0000305" key="7"/>
<protein>
    <recommendedName>
        <fullName>Ameloblastin</fullName>
    </recommendedName>
</protein>
<dbReference type="EMBL" id="U65021">
    <property type="protein sequence ID" value="AAB93765.1"/>
    <property type="molecule type" value="mRNA"/>
</dbReference>
<dbReference type="CCDS" id="CCDS51539.1"/>
<dbReference type="RefSeq" id="NP_033794.1">
    <property type="nucleotide sequence ID" value="NM_009664.2"/>
</dbReference>
<dbReference type="FunCoup" id="O55189">
    <property type="interactions" value="59"/>
</dbReference>
<dbReference type="STRING" id="10090.ENSMUSP00000142944"/>
<dbReference type="GlyGen" id="O55189">
    <property type="glycosylation" value="2 sites"/>
</dbReference>
<dbReference type="PhosphoSitePlus" id="O55189"/>
<dbReference type="PaxDb" id="10090-ENSMUSP00000031226"/>
<dbReference type="Antibodypedia" id="24340">
    <property type="antibodies" value="124 antibodies from 22 providers"/>
</dbReference>
<dbReference type="DNASU" id="11698"/>
<dbReference type="Ensembl" id="ENSMUST00000031226.9">
    <property type="protein sequence ID" value="ENSMUSP00000031226.8"/>
    <property type="gene ID" value="ENSMUSG00000029288.12"/>
</dbReference>
<dbReference type="GeneID" id="11698"/>
<dbReference type="KEGG" id="mmu:11698"/>
<dbReference type="UCSC" id="uc008xzr.2">
    <property type="organism name" value="mouse"/>
</dbReference>
<dbReference type="AGR" id="MGI:104655"/>
<dbReference type="CTD" id="258"/>
<dbReference type="MGI" id="MGI:104655">
    <property type="gene designation" value="Ambn"/>
</dbReference>
<dbReference type="VEuPathDB" id="HostDB:ENSMUSG00000029288"/>
<dbReference type="eggNOG" id="ENOG502QWCP">
    <property type="taxonomic scope" value="Eukaryota"/>
</dbReference>
<dbReference type="GeneTree" id="ENSGT00390000018227"/>
<dbReference type="InParanoid" id="O55189"/>
<dbReference type="OrthoDB" id="9908655at2759"/>
<dbReference type="TreeFam" id="TF337860"/>
<dbReference type="Reactome" id="R-MMU-381426">
    <property type="pathway name" value="Regulation of Insulin-like Growth Factor (IGF) transport and uptake by Insulin-like Growth Factor Binding Proteins (IGFBPs)"/>
</dbReference>
<dbReference type="Reactome" id="R-MMU-8957275">
    <property type="pathway name" value="Post-translational protein phosphorylation"/>
</dbReference>
<dbReference type="BioGRID-ORCS" id="11698">
    <property type="hits" value="3 hits in 61 CRISPR screens"/>
</dbReference>
<dbReference type="PRO" id="PR:O55189"/>
<dbReference type="Proteomes" id="UP000000589">
    <property type="component" value="Chromosome 5"/>
</dbReference>
<dbReference type="RNAct" id="O55189">
    <property type="molecule type" value="protein"/>
</dbReference>
<dbReference type="Bgee" id="ENSMUSG00000029288">
    <property type="expression patterns" value="Expressed in molar tooth and 31 other cell types or tissues"/>
</dbReference>
<dbReference type="ExpressionAtlas" id="O55189">
    <property type="expression patterns" value="baseline and differential"/>
</dbReference>
<dbReference type="GO" id="GO:0031012">
    <property type="term" value="C:extracellular matrix"/>
    <property type="evidence" value="ECO:0000304"/>
    <property type="project" value="MGI"/>
</dbReference>
<dbReference type="GO" id="GO:0005576">
    <property type="term" value="C:extracellular region"/>
    <property type="evidence" value="ECO:0007669"/>
    <property type="project" value="UniProtKB-KW"/>
</dbReference>
<dbReference type="GO" id="GO:0030021">
    <property type="term" value="F:extracellular matrix structural constituent conferring compression resistance"/>
    <property type="evidence" value="ECO:0000304"/>
    <property type="project" value="MGI"/>
</dbReference>
<dbReference type="GO" id="GO:0008083">
    <property type="term" value="F:growth factor activity"/>
    <property type="evidence" value="ECO:0000315"/>
    <property type="project" value="BHF-UCL"/>
</dbReference>
<dbReference type="GO" id="GO:0030345">
    <property type="term" value="F:structural constituent of tooth enamel"/>
    <property type="evidence" value="ECO:0007669"/>
    <property type="project" value="InterPro"/>
</dbReference>
<dbReference type="GO" id="GO:0031214">
    <property type="term" value="P:biomineral tissue development"/>
    <property type="evidence" value="ECO:0007669"/>
    <property type="project" value="UniProtKB-KW"/>
</dbReference>
<dbReference type="GO" id="GO:0007155">
    <property type="term" value="P:cell adhesion"/>
    <property type="evidence" value="ECO:0000315"/>
    <property type="project" value="BHF-UCL"/>
</dbReference>
<dbReference type="GO" id="GO:0030198">
    <property type="term" value="P:extracellular matrix organization"/>
    <property type="evidence" value="ECO:0000304"/>
    <property type="project" value="MGI"/>
</dbReference>
<dbReference type="GO" id="GO:0042475">
    <property type="term" value="P:odontogenesis of dentin-containing tooth"/>
    <property type="evidence" value="ECO:0007669"/>
    <property type="project" value="InterPro"/>
</dbReference>
<dbReference type="GO" id="GO:0042127">
    <property type="term" value="P:regulation of cell population proliferation"/>
    <property type="evidence" value="ECO:0000315"/>
    <property type="project" value="BHF-UCL"/>
</dbReference>
<dbReference type="InterPro" id="IPR007798">
    <property type="entry name" value="Amelin"/>
</dbReference>
<dbReference type="PANTHER" id="PTHR14115">
    <property type="entry name" value="AMELOBLASTIN"/>
    <property type="match status" value="1"/>
</dbReference>
<dbReference type="PANTHER" id="PTHR14115:SF0">
    <property type="entry name" value="AMELOBLASTIN"/>
    <property type="match status" value="1"/>
</dbReference>
<dbReference type="Pfam" id="PF05111">
    <property type="entry name" value="Amelin"/>
    <property type="match status" value="1"/>
</dbReference>
<dbReference type="SMART" id="SM00817">
    <property type="entry name" value="Amelin"/>
    <property type="match status" value="1"/>
</dbReference>
<feature type="signal peptide" evidence="3">
    <location>
        <begin position="1"/>
        <end position="26"/>
    </location>
</feature>
<feature type="chain" id="PRO_0000001193" description="Ameloblastin">
    <location>
        <begin position="27"/>
        <end position="407"/>
    </location>
</feature>
<feature type="region of interest" description="Disordered" evidence="4">
    <location>
        <begin position="124"/>
        <end position="143"/>
    </location>
</feature>
<feature type="region of interest" description="Disordered" evidence="4">
    <location>
        <begin position="259"/>
        <end position="304"/>
    </location>
</feature>
<feature type="modified residue" description="Hydroxyproline" evidence="1">
    <location>
        <position position="42"/>
    </location>
</feature>
<feature type="modified residue" description="Phosphoserine" evidence="2">
    <location>
        <position position="48"/>
    </location>
</feature>
<gene>
    <name type="primary">Ambn</name>
</gene>
<sequence length="407" mass="43664">MSASKIPLFKMKGLILFLSLVKMSLAVPAFPQQPGAQGMAPPGMASLSLETMRQLGSLQGLNALSQYSRLGFGKALNSLWLHGLLPPHNSFPWIGPREHETQQPSLQPHQPGLKPFLQPTAATGVQVTPQKPGPQPPMHPGQLPLQEGELIAPDEPQVAPSENPPTPEVPIMDFADPQFPTVFQIARSISRGPMAHNKASAFYPGMFYMSYGANQLNAPARIGFMSSEEMPGERGSPMAYGTLFPRFGGFRQTLRRLNQNSPKGGDFTVEVDSPVSVTKGPEKGEGPEGSPLQEANPGKRENPALLSQMAPGAHAGLLAFPNDHIPSMARGPAGQRLLGVTPAAADPLITPELAEVYETYGADVTTPLGDGEATMDITMSPDTQQPLLPGNKVHQPQVHNAWRFQEP</sequence>
<proteinExistence type="evidence at transcript level"/>